<comment type="similarity">
    <text evidence="1">Belongs to the UPF0482 family.</text>
</comment>
<sequence length="113" mass="12902">MNMTLNKRWCLTAILALSAVVYTSSSYAATDRLVIESGDSAQSRQQASMEKEQWNDTRSLRQKVNKRAEKEWDKADVAFDAQDNCQKSANVNAYWEPNTLRCLDRRTGRAINP</sequence>
<proteinExistence type="inferred from homology"/>
<name>Y1554_KLEP7</name>
<evidence type="ECO:0000255" key="1">
    <source>
        <dbReference type="HAMAP-Rule" id="MF_01581"/>
    </source>
</evidence>
<evidence type="ECO:0000256" key="2">
    <source>
        <dbReference type="SAM" id="MobiDB-lite"/>
    </source>
</evidence>
<protein>
    <recommendedName>
        <fullName evidence="1">UPF0482 protein KPN78578_15540</fullName>
    </recommendedName>
</protein>
<keyword id="KW-0732">Signal</keyword>
<reference key="1">
    <citation type="submission" date="2006-09" db="EMBL/GenBank/DDBJ databases">
        <authorList>
            <consortium name="The Klebsiella pneumonia Genome Sequencing Project"/>
            <person name="McClelland M."/>
            <person name="Sanderson E.K."/>
            <person name="Spieth J."/>
            <person name="Clifton W.S."/>
            <person name="Latreille P."/>
            <person name="Sabo A."/>
            <person name="Pepin K."/>
            <person name="Bhonagiri V."/>
            <person name="Porwollik S."/>
            <person name="Ali J."/>
            <person name="Wilson R.K."/>
        </authorList>
    </citation>
    <scope>NUCLEOTIDE SEQUENCE [LARGE SCALE GENOMIC DNA]</scope>
    <source>
        <strain>ATCC 700721 / MGH 78578</strain>
    </source>
</reference>
<organism>
    <name type="scientific">Klebsiella pneumoniae subsp. pneumoniae (strain ATCC 700721 / MGH 78578)</name>
    <dbReference type="NCBI Taxonomy" id="272620"/>
    <lineage>
        <taxon>Bacteria</taxon>
        <taxon>Pseudomonadati</taxon>
        <taxon>Pseudomonadota</taxon>
        <taxon>Gammaproteobacteria</taxon>
        <taxon>Enterobacterales</taxon>
        <taxon>Enterobacteriaceae</taxon>
        <taxon>Klebsiella/Raoultella group</taxon>
        <taxon>Klebsiella</taxon>
        <taxon>Klebsiella pneumoniae complex</taxon>
    </lineage>
</organism>
<feature type="signal peptide" evidence="1">
    <location>
        <begin position="1"/>
        <end position="28"/>
    </location>
</feature>
<feature type="chain" id="PRO_0000349095" description="UPF0482 protein KPN78578_15540">
    <location>
        <begin position="29"/>
        <end position="113"/>
    </location>
</feature>
<feature type="region of interest" description="Disordered" evidence="2">
    <location>
        <begin position="38"/>
        <end position="60"/>
    </location>
</feature>
<feature type="compositionally biased region" description="Polar residues" evidence="2">
    <location>
        <begin position="39"/>
        <end position="48"/>
    </location>
</feature>
<feature type="compositionally biased region" description="Basic and acidic residues" evidence="2">
    <location>
        <begin position="49"/>
        <end position="59"/>
    </location>
</feature>
<gene>
    <name type="ordered locus">KPN78578_15540</name>
    <name type="ORF">KPN_01584</name>
</gene>
<dbReference type="EMBL" id="CP000647">
    <property type="protein sequence ID" value="ABR77015.1"/>
    <property type="molecule type" value="Genomic_DNA"/>
</dbReference>
<dbReference type="RefSeq" id="WP_002903720.1">
    <property type="nucleotide sequence ID" value="NC_009648.1"/>
</dbReference>
<dbReference type="STRING" id="272620.KPN_01584"/>
<dbReference type="PaxDb" id="272620-KPN_01584"/>
<dbReference type="EnsemblBacteria" id="ABR77015">
    <property type="protein sequence ID" value="ABR77015"/>
    <property type="gene ID" value="KPN_01584"/>
</dbReference>
<dbReference type="KEGG" id="kpn:KPN_01584"/>
<dbReference type="HOGENOM" id="CLU_167574_0_0_6"/>
<dbReference type="Proteomes" id="UP000000265">
    <property type="component" value="Chromosome"/>
</dbReference>
<dbReference type="HAMAP" id="MF_01581">
    <property type="entry name" value="UPF0482"/>
    <property type="match status" value="1"/>
</dbReference>
<dbReference type="InterPro" id="IPR009700">
    <property type="entry name" value="DUF1283"/>
</dbReference>
<dbReference type="NCBIfam" id="NF010180">
    <property type="entry name" value="PRK13659.1"/>
    <property type="match status" value="1"/>
</dbReference>
<dbReference type="Pfam" id="PF06932">
    <property type="entry name" value="DUF1283"/>
    <property type="match status" value="1"/>
</dbReference>
<accession>A6T8U4</accession>